<keyword id="KW-0028">Amino-acid biosynthesis</keyword>
<keyword id="KW-0057">Aromatic amino acid biosynthesis</keyword>
<keyword id="KW-0456">Lyase</keyword>
<keyword id="KW-0704">Schiff base</keyword>
<reference key="1">
    <citation type="journal article" date="2007" name="Proc. Natl. Acad. Sci. U.S.A.">
        <title>Genomic and metabolic adaptations of Methanobrevibacter smithii to the human gut.</title>
        <authorList>
            <person name="Samuel B.S."/>
            <person name="Hansen E.E."/>
            <person name="Manchester J.K."/>
            <person name="Coutinho P.M."/>
            <person name="Henrissat B."/>
            <person name="Fulton R."/>
            <person name="Latreille P."/>
            <person name="Kim K."/>
            <person name="Wilson R.K."/>
            <person name="Gordon J.I."/>
        </authorList>
    </citation>
    <scope>NUCLEOTIDE SEQUENCE [LARGE SCALE GENOMIC DNA]</scope>
    <source>
        <strain>ATCC 35061 / DSM 861 / OCM 144 / PS</strain>
    </source>
</reference>
<sequence length="224" mass="25198">MYSQTKIAIPIFQAKKEDVIKVAEDCIEKGADVLEFRIDALDNPNFDDIKEIIEEINFPIIATNRISSEGGSFKGSEEERIDILLKCAPLVDYVDIELQSDDRYIKQIHDTGVTTIVSYHDFHKTPEINEIMYIVEKEQKLGDIAKVAFMPNDLDDTLKILAILSHCENTIAISMSDLGSYTRVMASKFDSPITFAAGRDVTAPGQIDIETMKSLLNMDLNLME</sequence>
<proteinExistence type="inferred from homology"/>
<feature type="chain" id="PRO_0000325535" description="3-dehydroquinate dehydratase">
    <location>
        <begin position="1"/>
        <end position="224"/>
    </location>
</feature>
<feature type="active site" description="Proton donor/acceptor" evidence="1">
    <location>
        <position position="120"/>
    </location>
</feature>
<feature type="active site" description="Schiff-base intermediate with substrate" evidence="1">
    <location>
        <position position="146"/>
    </location>
</feature>
<feature type="binding site" evidence="1">
    <location>
        <begin position="35"/>
        <end position="37"/>
    </location>
    <ligand>
        <name>3-dehydroquinate</name>
        <dbReference type="ChEBI" id="CHEBI:32364"/>
    </ligand>
</feature>
<feature type="binding site" evidence="1">
    <location>
        <position position="65"/>
    </location>
    <ligand>
        <name>3-dehydroquinate</name>
        <dbReference type="ChEBI" id="CHEBI:32364"/>
    </ligand>
</feature>
<feature type="binding site" evidence="1">
    <location>
        <position position="183"/>
    </location>
    <ligand>
        <name>3-dehydroquinate</name>
        <dbReference type="ChEBI" id="CHEBI:32364"/>
    </ligand>
</feature>
<feature type="binding site" evidence="1">
    <location>
        <position position="202"/>
    </location>
    <ligand>
        <name>3-dehydroquinate</name>
        <dbReference type="ChEBI" id="CHEBI:32364"/>
    </ligand>
</feature>
<feature type="binding site" evidence="1">
    <location>
        <position position="206"/>
    </location>
    <ligand>
        <name>3-dehydroquinate</name>
        <dbReference type="ChEBI" id="CHEBI:32364"/>
    </ligand>
</feature>
<comment type="function">
    <text evidence="1">Involved in the third step of the chorismate pathway, which leads to the biosynthesis of aromatic amino acids. Catalyzes the cis-dehydration of 3-dehydroquinate (DHQ) and introduces the first double bond of the aromatic ring to yield 3-dehydroshikimate.</text>
</comment>
<comment type="catalytic activity">
    <reaction evidence="1">
        <text>3-dehydroquinate = 3-dehydroshikimate + H2O</text>
        <dbReference type="Rhea" id="RHEA:21096"/>
        <dbReference type="ChEBI" id="CHEBI:15377"/>
        <dbReference type="ChEBI" id="CHEBI:16630"/>
        <dbReference type="ChEBI" id="CHEBI:32364"/>
        <dbReference type="EC" id="4.2.1.10"/>
    </reaction>
</comment>
<comment type="pathway">
    <text evidence="1">Metabolic intermediate biosynthesis; chorismate biosynthesis; chorismate from D-erythrose 4-phosphate and phosphoenolpyruvate: step 3/7.</text>
</comment>
<comment type="subunit">
    <text evidence="1">Homodimer.</text>
</comment>
<comment type="similarity">
    <text evidence="1">Belongs to the type-I 3-dehydroquinase family.</text>
</comment>
<organism>
    <name type="scientific">Methanobrevibacter smithii (strain ATCC 35061 / DSM 861 / OCM 144 / PS)</name>
    <dbReference type="NCBI Taxonomy" id="420247"/>
    <lineage>
        <taxon>Archaea</taxon>
        <taxon>Methanobacteriati</taxon>
        <taxon>Methanobacteriota</taxon>
        <taxon>Methanomada group</taxon>
        <taxon>Methanobacteria</taxon>
        <taxon>Methanobacteriales</taxon>
        <taxon>Methanobacteriaceae</taxon>
        <taxon>Methanobrevibacter</taxon>
    </lineage>
</organism>
<evidence type="ECO:0000255" key="1">
    <source>
        <dbReference type="HAMAP-Rule" id="MF_00214"/>
    </source>
</evidence>
<gene>
    <name evidence="1" type="primary">aroD</name>
    <name type="ordered locus">Msm_0231</name>
</gene>
<protein>
    <recommendedName>
        <fullName evidence="1">3-dehydroquinate dehydratase</fullName>
        <shortName evidence="1">3-dehydroquinase</shortName>
        <ecNumber evidence="1">4.2.1.10</ecNumber>
    </recommendedName>
    <alternativeName>
        <fullName evidence="1">Type I DHQase</fullName>
    </alternativeName>
    <alternativeName>
        <fullName evidence="1">Type I dehydroquinase</fullName>
        <shortName evidence="1">DHQ1</shortName>
    </alternativeName>
</protein>
<name>AROD_METS3</name>
<accession>A5UJQ8</accession>
<dbReference type="EC" id="4.2.1.10" evidence="1"/>
<dbReference type="EMBL" id="CP000678">
    <property type="protein sequence ID" value="ABQ86436.1"/>
    <property type="molecule type" value="Genomic_DNA"/>
</dbReference>
<dbReference type="RefSeq" id="WP_004034290.1">
    <property type="nucleotide sequence ID" value="NZ_CP117965.1"/>
</dbReference>
<dbReference type="SMR" id="A5UJQ8"/>
<dbReference type="STRING" id="420247.Msm_0231"/>
<dbReference type="EnsemblBacteria" id="ABQ86436">
    <property type="protein sequence ID" value="ABQ86436"/>
    <property type="gene ID" value="Msm_0231"/>
</dbReference>
<dbReference type="GeneID" id="78816854"/>
<dbReference type="KEGG" id="msi:Msm_0231"/>
<dbReference type="PATRIC" id="fig|420247.28.peg.234"/>
<dbReference type="eggNOG" id="arCOG02097">
    <property type="taxonomic scope" value="Archaea"/>
</dbReference>
<dbReference type="HOGENOM" id="CLU_064444_2_1_2"/>
<dbReference type="UniPathway" id="UPA00053">
    <property type="reaction ID" value="UER00086"/>
</dbReference>
<dbReference type="Proteomes" id="UP000001992">
    <property type="component" value="Chromosome"/>
</dbReference>
<dbReference type="GO" id="GO:0003855">
    <property type="term" value="F:3-dehydroquinate dehydratase activity"/>
    <property type="evidence" value="ECO:0007669"/>
    <property type="project" value="UniProtKB-UniRule"/>
</dbReference>
<dbReference type="GO" id="GO:0046279">
    <property type="term" value="P:3,4-dihydroxybenzoate biosynthetic process"/>
    <property type="evidence" value="ECO:0007669"/>
    <property type="project" value="TreeGrafter"/>
</dbReference>
<dbReference type="GO" id="GO:0008652">
    <property type="term" value="P:amino acid biosynthetic process"/>
    <property type="evidence" value="ECO:0007669"/>
    <property type="project" value="UniProtKB-KW"/>
</dbReference>
<dbReference type="GO" id="GO:0009073">
    <property type="term" value="P:aromatic amino acid family biosynthetic process"/>
    <property type="evidence" value="ECO:0007669"/>
    <property type="project" value="UniProtKB-KW"/>
</dbReference>
<dbReference type="GO" id="GO:0009423">
    <property type="term" value="P:chorismate biosynthetic process"/>
    <property type="evidence" value="ECO:0007669"/>
    <property type="project" value="UniProtKB-UniRule"/>
</dbReference>
<dbReference type="CDD" id="cd00502">
    <property type="entry name" value="DHQase_I"/>
    <property type="match status" value="1"/>
</dbReference>
<dbReference type="FunFam" id="3.20.20.70:FF:000047">
    <property type="entry name" value="3-dehydroquinate dehydratase"/>
    <property type="match status" value="1"/>
</dbReference>
<dbReference type="Gene3D" id="3.20.20.70">
    <property type="entry name" value="Aldolase class I"/>
    <property type="match status" value="1"/>
</dbReference>
<dbReference type="HAMAP" id="MF_00214">
    <property type="entry name" value="AroD"/>
    <property type="match status" value="1"/>
</dbReference>
<dbReference type="InterPro" id="IPR013785">
    <property type="entry name" value="Aldolase_TIM"/>
</dbReference>
<dbReference type="InterPro" id="IPR001381">
    <property type="entry name" value="DHquinase_I"/>
</dbReference>
<dbReference type="InterPro" id="IPR050146">
    <property type="entry name" value="Type-I_3-dehydroquinase"/>
</dbReference>
<dbReference type="NCBIfam" id="TIGR01093">
    <property type="entry name" value="aroD"/>
    <property type="match status" value="1"/>
</dbReference>
<dbReference type="PANTHER" id="PTHR43699">
    <property type="entry name" value="3-DEHYDROQUINATE DEHYDRATASE"/>
    <property type="match status" value="1"/>
</dbReference>
<dbReference type="PANTHER" id="PTHR43699:SF1">
    <property type="entry name" value="3-DEHYDROQUINATE DEHYDRATASE"/>
    <property type="match status" value="1"/>
</dbReference>
<dbReference type="Pfam" id="PF01487">
    <property type="entry name" value="DHquinase_I"/>
    <property type="match status" value="1"/>
</dbReference>
<dbReference type="SUPFAM" id="SSF51569">
    <property type="entry name" value="Aldolase"/>
    <property type="match status" value="1"/>
</dbReference>